<dbReference type="EMBL" id="CP000926">
    <property type="protein sequence ID" value="ABZ00099.1"/>
    <property type="molecule type" value="Genomic_DNA"/>
</dbReference>
<dbReference type="RefSeq" id="WP_012273775.1">
    <property type="nucleotide sequence ID" value="NC_010322.1"/>
</dbReference>
<dbReference type="SMR" id="B0KTK1"/>
<dbReference type="KEGG" id="ppg:PputGB1_4210"/>
<dbReference type="eggNOG" id="COG2900">
    <property type="taxonomic scope" value="Bacteria"/>
</dbReference>
<dbReference type="HOGENOM" id="CLU_180796_4_1_6"/>
<dbReference type="Proteomes" id="UP000002157">
    <property type="component" value="Chromosome"/>
</dbReference>
<dbReference type="Gene3D" id="1.20.5.300">
    <property type="match status" value="1"/>
</dbReference>
<dbReference type="HAMAP" id="MF_00715">
    <property type="entry name" value="SlyX"/>
    <property type="match status" value="1"/>
</dbReference>
<dbReference type="InterPro" id="IPR007236">
    <property type="entry name" value="SlyX"/>
</dbReference>
<dbReference type="NCBIfam" id="NF001421">
    <property type="entry name" value="PRK00295.1"/>
    <property type="match status" value="1"/>
</dbReference>
<dbReference type="PANTHER" id="PTHR36508">
    <property type="entry name" value="PROTEIN SLYX"/>
    <property type="match status" value="1"/>
</dbReference>
<dbReference type="PANTHER" id="PTHR36508:SF1">
    <property type="entry name" value="PROTEIN SLYX"/>
    <property type="match status" value="1"/>
</dbReference>
<dbReference type="Pfam" id="PF04102">
    <property type="entry name" value="SlyX"/>
    <property type="match status" value="1"/>
</dbReference>
<sequence length="68" mass="7901">MTLEMRMVELETRQAFQDDTIQALNDVVVEQGRVIDRLQLQMAELIKRHEEMVGQYGSEGEEAPPPHY</sequence>
<proteinExistence type="inferred from homology"/>
<feature type="chain" id="PRO_1000083242" description="Protein SlyX homolog">
    <location>
        <begin position="1"/>
        <end position="68"/>
    </location>
</feature>
<protein>
    <recommendedName>
        <fullName evidence="1">Protein SlyX homolog</fullName>
    </recommendedName>
</protein>
<name>SLYX_PSEPG</name>
<accession>B0KTK1</accession>
<reference key="1">
    <citation type="submission" date="2008-01" db="EMBL/GenBank/DDBJ databases">
        <title>Complete sequence of Pseudomonas putida GB-1.</title>
        <authorList>
            <consortium name="US DOE Joint Genome Institute"/>
            <person name="Copeland A."/>
            <person name="Lucas S."/>
            <person name="Lapidus A."/>
            <person name="Barry K."/>
            <person name="Glavina del Rio T."/>
            <person name="Dalin E."/>
            <person name="Tice H."/>
            <person name="Pitluck S."/>
            <person name="Bruce D."/>
            <person name="Goodwin L."/>
            <person name="Chertkov O."/>
            <person name="Brettin T."/>
            <person name="Detter J.C."/>
            <person name="Han C."/>
            <person name="Kuske C.R."/>
            <person name="Schmutz J."/>
            <person name="Larimer F."/>
            <person name="Land M."/>
            <person name="Hauser L."/>
            <person name="Kyrpides N."/>
            <person name="Kim E."/>
            <person name="McCarthy J.K."/>
            <person name="Richardson P."/>
        </authorList>
    </citation>
    <scope>NUCLEOTIDE SEQUENCE [LARGE SCALE GENOMIC DNA]</scope>
    <source>
        <strain>GB-1</strain>
    </source>
</reference>
<organism>
    <name type="scientific">Pseudomonas putida (strain GB-1)</name>
    <dbReference type="NCBI Taxonomy" id="76869"/>
    <lineage>
        <taxon>Bacteria</taxon>
        <taxon>Pseudomonadati</taxon>
        <taxon>Pseudomonadota</taxon>
        <taxon>Gammaproteobacteria</taxon>
        <taxon>Pseudomonadales</taxon>
        <taxon>Pseudomonadaceae</taxon>
        <taxon>Pseudomonas</taxon>
    </lineage>
</organism>
<comment type="similarity">
    <text evidence="1">Belongs to the SlyX family.</text>
</comment>
<evidence type="ECO:0000255" key="1">
    <source>
        <dbReference type="HAMAP-Rule" id="MF_00715"/>
    </source>
</evidence>
<gene>
    <name evidence="1" type="primary">slyX</name>
    <name type="ordered locus">PputGB1_4210</name>
</gene>